<name>FLGI_HELPJ</name>
<sequence length="342" mass="36649">MKRVFLWLIFVLAFHKLLAEKIGDIASVVGVRDNQLIGYGLVIGLNGTGNKSGSKFTMQSISNMLESVNVKISADDIKSKNVAAVMITASLPPFARQGDKIDIHISSIGDAKSIQGGTLVMTPLNAVDGNIYALAQGAIISGNSSNLLSANIINGATIEREVSYDLFHKNAMTLSLKNPNFKNAIQVQNTLNKVFGNKVAIALDPKTIQITRPERLSMVEFLALVQEIPINYSAKNKIIVDEKSGTIVSGVDIIVHPIVVTSQDITLKITKEPLNDSKNMQDLDNNMSLDTAHNTLSSNGKNITIAGVVKALQKIGVSAKGMVSILQALKKSGAISAEMEIL</sequence>
<proteinExistence type="inferred from homology"/>
<feature type="signal peptide" evidence="2">
    <location>
        <begin position="1"/>
        <end position="15"/>
    </location>
</feature>
<feature type="chain" id="PRO_0000009506" description="Flagellar P-ring protein">
    <location>
        <begin position="16"/>
        <end position="342"/>
    </location>
</feature>
<evidence type="ECO:0000250" key="1"/>
<evidence type="ECO:0000255" key="2"/>
<evidence type="ECO:0000305" key="3"/>
<dbReference type="EMBL" id="AE001439">
    <property type="protein sequence ID" value="AAD05817.1"/>
    <property type="molecule type" value="Genomic_DNA"/>
</dbReference>
<dbReference type="PIR" id="A71957">
    <property type="entry name" value="A71957"/>
</dbReference>
<dbReference type="RefSeq" id="WP_000832116.1">
    <property type="nucleotide sequence ID" value="NC_000921.1"/>
</dbReference>
<dbReference type="SMR" id="Q9ZMI9"/>
<dbReference type="KEGG" id="hpj:jhp_0231"/>
<dbReference type="eggNOG" id="COG1706">
    <property type="taxonomic scope" value="Bacteria"/>
</dbReference>
<dbReference type="Proteomes" id="UP000000804">
    <property type="component" value="Chromosome"/>
</dbReference>
<dbReference type="GO" id="GO:0009428">
    <property type="term" value="C:bacterial-type flagellum basal body, distal rod, P ring"/>
    <property type="evidence" value="ECO:0007669"/>
    <property type="project" value="InterPro"/>
</dbReference>
<dbReference type="GO" id="GO:0030288">
    <property type="term" value="C:outer membrane-bounded periplasmic space"/>
    <property type="evidence" value="ECO:0007669"/>
    <property type="project" value="InterPro"/>
</dbReference>
<dbReference type="GO" id="GO:0005198">
    <property type="term" value="F:structural molecule activity"/>
    <property type="evidence" value="ECO:0007669"/>
    <property type="project" value="InterPro"/>
</dbReference>
<dbReference type="GO" id="GO:0071973">
    <property type="term" value="P:bacterial-type flagellum-dependent cell motility"/>
    <property type="evidence" value="ECO:0007669"/>
    <property type="project" value="InterPro"/>
</dbReference>
<dbReference type="HAMAP" id="MF_00416">
    <property type="entry name" value="FlgI"/>
    <property type="match status" value="1"/>
</dbReference>
<dbReference type="InterPro" id="IPR001782">
    <property type="entry name" value="Flag_FlgI"/>
</dbReference>
<dbReference type="NCBIfam" id="NF003676">
    <property type="entry name" value="PRK05303.1"/>
    <property type="match status" value="1"/>
</dbReference>
<dbReference type="PANTHER" id="PTHR30381">
    <property type="entry name" value="FLAGELLAR P-RING PERIPLASMIC PROTEIN FLGI"/>
    <property type="match status" value="1"/>
</dbReference>
<dbReference type="PANTHER" id="PTHR30381:SF0">
    <property type="entry name" value="FLAGELLAR P-RING PROTEIN"/>
    <property type="match status" value="1"/>
</dbReference>
<dbReference type="Pfam" id="PF02119">
    <property type="entry name" value="FlgI"/>
    <property type="match status" value="1"/>
</dbReference>
<dbReference type="PRINTS" id="PR01010">
    <property type="entry name" value="FLGPRINGFLGI"/>
</dbReference>
<organism>
    <name type="scientific">Helicobacter pylori (strain J99 / ATCC 700824)</name>
    <name type="common">Campylobacter pylori J99</name>
    <dbReference type="NCBI Taxonomy" id="85963"/>
    <lineage>
        <taxon>Bacteria</taxon>
        <taxon>Pseudomonadati</taxon>
        <taxon>Campylobacterota</taxon>
        <taxon>Epsilonproteobacteria</taxon>
        <taxon>Campylobacterales</taxon>
        <taxon>Helicobacteraceae</taxon>
        <taxon>Helicobacter</taxon>
    </lineage>
</organism>
<reference key="1">
    <citation type="journal article" date="1999" name="Nature">
        <title>Genomic sequence comparison of two unrelated isolates of the human gastric pathogen Helicobacter pylori.</title>
        <authorList>
            <person name="Alm R.A."/>
            <person name="Ling L.-S.L."/>
            <person name="Moir D.T."/>
            <person name="King B.L."/>
            <person name="Brown E.D."/>
            <person name="Doig P.C."/>
            <person name="Smith D.R."/>
            <person name="Noonan B."/>
            <person name="Guild B.C."/>
            <person name="deJonge B.L."/>
            <person name="Carmel G."/>
            <person name="Tummino P.J."/>
            <person name="Caruso A."/>
            <person name="Uria-Nickelsen M."/>
            <person name="Mills D.M."/>
            <person name="Ives C."/>
            <person name="Gibson R."/>
            <person name="Merberg D."/>
            <person name="Mills S.D."/>
            <person name="Jiang Q."/>
            <person name="Taylor D.E."/>
            <person name="Vovis G.F."/>
            <person name="Trust T.J."/>
        </authorList>
    </citation>
    <scope>NUCLEOTIDE SEQUENCE [LARGE SCALE GENOMIC DNA]</scope>
    <source>
        <strain>J99 / ATCC 700824</strain>
    </source>
</reference>
<accession>Q9ZMI9</accession>
<protein>
    <recommendedName>
        <fullName>Flagellar P-ring protein</fullName>
    </recommendedName>
    <alternativeName>
        <fullName>Basal body P-ring protein</fullName>
    </alternativeName>
</protein>
<comment type="function">
    <text evidence="1">Assembles around the rod to form the L-ring and probably protects the motor/basal body from shearing forces during rotation.</text>
</comment>
<comment type="subunit">
    <text evidence="1">The basal body constitutes a major portion of the flagellar organelle and consists of four rings (L,P,S, and M) mounted on a central rod.</text>
</comment>
<comment type="subcellular location">
    <subcellularLocation>
        <location evidence="1">Periplasm</location>
    </subcellularLocation>
    <subcellularLocation>
        <location evidence="1">Bacterial flagellum basal body</location>
    </subcellularLocation>
</comment>
<comment type="similarity">
    <text evidence="3">Belongs to the FlgI family.</text>
</comment>
<gene>
    <name type="primary">flgI</name>
    <name type="ordered locus">jhp_0231</name>
</gene>
<keyword id="KW-0975">Bacterial flagellum</keyword>
<keyword id="KW-0574">Periplasm</keyword>
<keyword id="KW-0732">Signal</keyword>